<dbReference type="EC" id="1.-.-.-" evidence="2"/>
<dbReference type="EMBL" id="LO017727">
    <property type="protein sequence ID" value="CRH04725.1"/>
    <property type="molecule type" value="Genomic_DNA"/>
</dbReference>
<dbReference type="PDB" id="4JJ0">
    <property type="method" value="X-ray"/>
    <property type="resolution" value="1.80 A"/>
    <property type="chains" value="A/B=26-260"/>
</dbReference>
<dbReference type="PDB" id="4JJ3">
    <property type="method" value="X-ray"/>
    <property type="resolution" value="2.80 A"/>
    <property type="chains" value="A/B=26-260"/>
</dbReference>
<dbReference type="PDBsum" id="4JJ0"/>
<dbReference type="PDBsum" id="4JJ3"/>
<dbReference type="SMR" id="A0A1S7LCW6"/>
<dbReference type="GO" id="GO:0005886">
    <property type="term" value="C:plasma membrane"/>
    <property type="evidence" value="ECO:0000250"/>
    <property type="project" value="UniProtKB"/>
</dbReference>
<dbReference type="GO" id="GO:0046872">
    <property type="term" value="F:metal ion binding"/>
    <property type="evidence" value="ECO:0007669"/>
    <property type="project" value="UniProtKB-KW"/>
</dbReference>
<dbReference type="GO" id="GO:0016491">
    <property type="term" value="F:oxidoreductase activity"/>
    <property type="evidence" value="ECO:0007669"/>
    <property type="project" value="UniProtKB-KW"/>
</dbReference>
<dbReference type="Gene3D" id="2.30.42.60">
    <property type="match status" value="1"/>
</dbReference>
<dbReference type="InterPro" id="IPR040963">
    <property type="entry name" value="MCR"/>
</dbReference>
<dbReference type="InterPro" id="IPR001478">
    <property type="entry name" value="PDZ"/>
</dbReference>
<dbReference type="InterPro" id="IPR036034">
    <property type="entry name" value="PDZ_sf"/>
</dbReference>
<dbReference type="NCBIfam" id="NF040965">
    <property type="entry name" value="MamP"/>
    <property type="match status" value="1"/>
</dbReference>
<dbReference type="Pfam" id="PF18509">
    <property type="entry name" value="MCR"/>
    <property type="match status" value="2"/>
</dbReference>
<dbReference type="Pfam" id="PF13180">
    <property type="entry name" value="PDZ_2"/>
    <property type="match status" value="1"/>
</dbReference>
<dbReference type="SUPFAM" id="SSF50156">
    <property type="entry name" value="PDZ domain-like"/>
    <property type="match status" value="1"/>
</dbReference>
<comment type="function">
    <text evidence="2">Oxidizes Fe(2+) at alkaline pH; successively forms ferrihydrite (Fe(3+)(2)O(3) 0.5 H(2)O) then magnetite (Fe(3)O(4)) from an Fe(2+) solution.</text>
</comment>
<comment type="cofactor">
    <cofactor evidence="2">
        <name>heme</name>
        <dbReference type="ChEBI" id="CHEBI:30413"/>
    </cofactor>
    <text evidence="2">Binds 2 heme groups via the magnetochrome (MCR) motifs.</text>
</comment>
<comment type="biophysicochemical properties">
    <phDependence>
        <text evidence="2">Optimum pH is 9.0 for oxidation of Fe(2+).</text>
    </phDependence>
</comment>
<comment type="subunit">
    <text evidence="2">Exists in a homodimer-homotetramer equilibrium.</text>
</comment>
<comment type="subcellular location">
    <subcellularLocation>
        <location evidence="1">Cell inner membrane</location>
        <topology evidence="5">Single-pass membrane protein</topology>
    </subcellularLocation>
    <text evidence="1">Not seen in magnetosome membranes.</text>
</comment>
<comment type="domain">
    <text evidence="2">The dimer forms a pocket of about 8 X 15 Angstroms, lined with acidic residues, which may bind 2 Fe(2+) ions.</text>
</comment>
<comment type="PTM">
    <text evidence="1">Subject to proteolytic cleavage which requires both MamE and MamO.</text>
</comment>
<comment type="miscellaneous">
    <text evidence="4">This bacteria has on average 17 elongated cubo-octahedral shaped magnetosome with a size of 64 X 57 nm which contain membrane-bound crystals of magnetite (Fe(3)O(4)).</text>
</comment>
<comment type="similarity">
    <text evidence="4">Belongs to the magnetosome MamP family.</text>
</comment>
<organism>
    <name type="scientific">Magnetococcus massalia (strain MO-1)</name>
    <dbReference type="NCBI Taxonomy" id="451514"/>
    <lineage>
        <taxon>Bacteria</taxon>
        <taxon>Pseudomonadati</taxon>
        <taxon>Pseudomonadota</taxon>
        <taxon>Alphaproteobacteria</taxon>
        <taxon>Magnetococcales</taxon>
        <taxon>Magnetococcaceae</taxon>
        <taxon>Magnetococcus</taxon>
    </lineage>
</organism>
<proteinExistence type="evidence at protein level"/>
<protein>
    <recommendedName>
        <fullName evidence="4">Multi-heme protein MamP</fullName>
        <ecNumber evidence="2">1.-.-.-</ecNumber>
    </recommendedName>
    <alternativeName>
        <fullName evidence="4">Magnetochrome MamP</fullName>
    </alternativeName>
    <alternativeName>
        <fullName evidence="3">Magnetosome-associated protein MamP</fullName>
    </alternativeName>
</protein>
<reference key="1">
    <citation type="journal article" date="2017" name="Environ. Microbiol.">
        <title>The chimeric nature of the genomes of marine magnetotactic coccoid-ovoid bacteria defines a novel group of Proteobacteria.</title>
        <authorList>
            <person name="Ji B."/>
            <person name="Zhang S.D."/>
            <person name="Zhang W.J."/>
            <person name="Rouy Z."/>
            <person name="Alberto F."/>
            <person name="Santini C.L."/>
            <person name="Mangenot S."/>
            <person name="Gagnot S."/>
            <person name="Philippe N."/>
            <person name="Pradel N."/>
            <person name="Zhang L."/>
            <person name="Tempel S."/>
            <person name="Li Y."/>
            <person name="Medigue C."/>
            <person name="Henrissat B."/>
            <person name="Coutinho P.M."/>
            <person name="Barbe V."/>
            <person name="Talla E."/>
            <person name="Wu L.F."/>
        </authorList>
    </citation>
    <scope>NUCLEOTIDE SEQUENCE [LARGE SCALE GENOMIC DNA]</scope>
    <source>
        <strain>MO-1</strain>
    </source>
</reference>
<reference evidence="6 7" key="2">
    <citation type="journal article" date="2013" name="Nature">
        <title>Structural insight into magnetochrome-mediated magnetite biomineralization.</title>
        <authorList>
            <person name="Siponen M.I."/>
            <person name="Legrand P."/>
            <person name="Widdrat M."/>
            <person name="Jones S.R."/>
            <person name="Zhang W.J."/>
            <person name="Chang M.C."/>
            <person name="Faivre D."/>
            <person name="Arnoux P."/>
            <person name="Pignol D."/>
        </authorList>
    </citation>
    <scope>X-RAY CRYSTALLOGRAPHY (1.80 ANGSTROMS) OF 26-260 IN COMPLEX WITH HEME</scope>
    <scope>FUNCTION</scope>
    <scope>COFACTOR</scope>
    <scope>SUBUNIT</scope>
    <scope>DOMAIN</scope>
    <scope>HEME-BINDING</scope>
    <scope>IRON-BINDING</scope>
    <scope>MUTAGENESIS OF 91-GLU--GLU-98; GLU-123; GLU-193 AND 227-ASP--ASP-229</scope>
    <source>
        <strain>MO-1</strain>
    </source>
</reference>
<accession>A0A1S7LCW6</accession>
<evidence type="ECO:0000250" key="1">
    <source>
        <dbReference type="UniProtKB" id="Q2W8Q1"/>
    </source>
</evidence>
<evidence type="ECO:0000269" key="2">
    <source>
    </source>
</evidence>
<evidence type="ECO:0000303" key="3">
    <source>
    </source>
</evidence>
<evidence type="ECO:0000305" key="4"/>
<evidence type="ECO:0000305" key="5">
    <source>
    </source>
</evidence>
<evidence type="ECO:0007744" key="6">
    <source>
        <dbReference type="PDB" id="4JJ0"/>
    </source>
</evidence>
<evidence type="ECO:0007744" key="7">
    <source>
        <dbReference type="PDB" id="4JJ3"/>
    </source>
</evidence>
<name>MAMP_MAGMO</name>
<sequence length="260" mass="27638">MKLKGTTIVALGMLVVAIMVLASMIDLPGSDMSATPAPPDTPRGAPIVGGQGQAMGLPVAMQRRRGEQRAPVPALSDANGGFVAPNVQFSEAHWQGMEALPLSIELKRKLKLPLDLEGLLIDETSLNAAVSGLLAGDVLVAINGRKVKTLKKMQKETRRVQMDRRASLTVYRKGRLLTLTLSEEKNLGLAQVETAPMILPGDIMPHPYRGPCTQCHAIGTTGHITPDPDGIVLPPGPIRAGAKMPHRDRGPCAACHAIIQ</sequence>
<gene>
    <name type="primary">mamP</name>
    <name type="ORF">MAGMO_0521</name>
</gene>
<keyword id="KW-0002">3D-structure</keyword>
<keyword id="KW-0091">Biomineralization</keyword>
<keyword id="KW-0997">Cell inner membrane</keyword>
<keyword id="KW-1003">Cell membrane</keyword>
<keyword id="KW-0349">Heme</keyword>
<keyword id="KW-0408">Iron</keyword>
<keyword id="KW-0472">Membrane</keyword>
<keyword id="KW-0479">Metal-binding</keyword>
<keyword id="KW-0560">Oxidoreductase</keyword>
<keyword id="KW-0812">Transmembrane</keyword>
<keyword id="KW-1133">Transmembrane helix</keyword>
<feature type="chain" id="PRO_0000447784" description="Multi-heme protein MamP">
    <location>
        <begin position="1"/>
        <end position="260"/>
    </location>
</feature>
<feature type="topological domain" description="Cytoplasmic" evidence="4">
    <location>
        <begin position="1"/>
        <end position="7"/>
    </location>
</feature>
<feature type="transmembrane region" evidence="5">
    <location>
        <begin position="8"/>
        <end position="21"/>
    </location>
</feature>
<feature type="topological domain" description="Lumenal" evidence="4">
    <location>
        <begin position="22"/>
        <end position="260"/>
    </location>
</feature>
<feature type="region of interest" description="PDZ" evidence="5">
    <location>
        <begin position="86"/>
        <end position="194"/>
    </location>
</feature>
<feature type="short sequence motif" description="MCR (magnetochrome) 1" evidence="5">
    <location>
        <begin position="195"/>
        <end position="218"/>
    </location>
</feature>
<feature type="short sequence motif" description="MCR 2" evidence="5">
    <location>
        <begin position="238"/>
        <end position="258"/>
    </location>
</feature>
<feature type="binding site" description="axial binding residue" evidence="2 6 7">
    <location>
        <position position="206"/>
    </location>
    <ligand>
        <name>heme</name>
        <dbReference type="ChEBI" id="CHEBI:30413"/>
        <label>1</label>
    </ligand>
    <ligandPart>
        <name>Fe</name>
        <dbReference type="ChEBI" id="CHEBI:18248"/>
    </ligandPart>
</feature>
<feature type="binding site" description="covalent" evidence="2 6 7">
    <location>
        <position position="212"/>
    </location>
    <ligand>
        <name>heme</name>
        <dbReference type="ChEBI" id="CHEBI:30413"/>
        <label>1</label>
    </ligand>
</feature>
<feature type="binding site" description="covalent" evidence="2 6 7">
    <location>
        <position position="215"/>
    </location>
    <ligand>
        <name>heme</name>
        <dbReference type="ChEBI" id="CHEBI:30413"/>
        <label>1</label>
    </ligand>
</feature>
<feature type="binding site" description="axial binding residue" evidence="2 6 7">
    <location>
        <position position="216"/>
    </location>
    <ligand>
        <name>heme</name>
        <dbReference type="ChEBI" id="CHEBI:30413"/>
        <label>1</label>
    </ligand>
    <ligandPart>
        <name>Fe</name>
        <dbReference type="ChEBI" id="CHEBI:18248"/>
    </ligandPart>
</feature>
<feature type="binding site" description="axial binding residue" evidence="2 6 7">
    <location>
        <position position="246"/>
    </location>
    <ligand>
        <name>heme</name>
        <dbReference type="ChEBI" id="CHEBI:30413"/>
        <label>2</label>
    </ligand>
    <ligandPart>
        <name>Fe</name>
        <dbReference type="ChEBI" id="CHEBI:18248"/>
    </ligandPart>
</feature>
<feature type="binding site" description="covalent" evidence="2 6 7">
    <location>
        <position position="252"/>
    </location>
    <ligand>
        <name>heme</name>
        <dbReference type="ChEBI" id="CHEBI:30413"/>
        <label>2</label>
    </ligand>
</feature>
<feature type="binding site" description="covalent" evidence="2 6 7">
    <location>
        <position position="255"/>
    </location>
    <ligand>
        <name>heme</name>
        <dbReference type="ChEBI" id="CHEBI:30413"/>
        <label>2</label>
    </ligand>
</feature>
<feature type="binding site" description="axial binding residue" evidence="2 6 7">
    <location>
        <position position="256"/>
    </location>
    <ligand>
        <name>heme</name>
        <dbReference type="ChEBI" id="CHEBI:30413"/>
        <label>2</label>
    </ligand>
    <ligandPart>
        <name>Fe</name>
        <dbReference type="ChEBI" id="CHEBI:18248"/>
    </ligandPart>
</feature>
<feature type="mutagenesis site" description="Loss of magnetic response and magnetite formation; when associated with A-123, A-193 and 227-A--A-229." evidence="2">
    <original>EAHWQGME</original>
    <variation>AAAWQGMA</variation>
    <location>
        <begin position="91"/>
        <end position="98"/>
    </location>
</feature>
<feature type="mutagenesis site" description="Loss of magnetic response and magnetite formation; when associated with 91-A--A-98, A-193 and 227-A--A-229." evidence="2">
    <original>E</original>
    <variation>A</variation>
    <location>
        <position position="123"/>
    </location>
</feature>
<feature type="mutagenesis site" description="Loss of magnetic response and magnetite formation; when associated with 91-A--A-98, A-123 and 227-A--A-229." evidence="2">
    <original>E</original>
    <variation>A</variation>
    <location>
        <position position="193"/>
    </location>
</feature>
<feature type="mutagenesis site" description="Loss of magnetic response and magnetite formation; when associated with 91-A--A-98, A-123 and A-193." evidence="2">
    <original>DPD</original>
    <variation>APA</variation>
    <location>
        <begin position="227"/>
        <end position="229"/>
    </location>
</feature>